<reference key="1">
    <citation type="journal article" date="2009" name="Appl. Environ. Microbiol.">
        <title>Genome analysis of the meat starter culture bacterium Staphylococcus carnosus TM300.</title>
        <authorList>
            <person name="Rosenstein R."/>
            <person name="Nerz C."/>
            <person name="Biswas L."/>
            <person name="Resch A."/>
            <person name="Raddatz G."/>
            <person name="Schuster S.C."/>
            <person name="Goetz F."/>
        </authorList>
    </citation>
    <scope>NUCLEOTIDE SEQUENCE [LARGE SCALE GENOMIC DNA]</scope>
    <source>
        <strain>TM300</strain>
    </source>
</reference>
<name>MIAA_STACT</name>
<comment type="function">
    <text evidence="1">Catalyzes the transfer of a dimethylallyl group onto the adenine at position 37 in tRNAs that read codons beginning with uridine, leading to the formation of N6-(dimethylallyl)adenosine (i(6)A).</text>
</comment>
<comment type="catalytic activity">
    <reaction evidence="1">
        <text>adenosine(37) in tRNA + dimethylallyl diphosphate = N(6)-dimethylallyladenosine(37) in tRNA + diphosphate</text>
        <dbReference type="Rhea" id="RHEA:26482"/>
        <dbReference type="Rhea" id="RHEA-COMP:10162"/>
        <dbReference type="Rhea" id="RHEA-COMP:10375"/>
        <dbReference type="ChEBI" id="CHEBI:33019"/>
        <dbReference type="ChEBI" id="CHEBI:57623"/>
        <dbReference type="ChEBI" id="CHEBI:74411"/>
        <dbReference type="ChEBI" id="CHEBI:74415"/>
        <dbReference type="EC" id="2.5.1.75"/>
    </reaction>
</comment>
<comment type="cofactor">
    <cofactor evidence="1">
        <name>Mg(2+)</name>
        <dbReference type="ChEBI" id="CHEBI:18420"/>
    </cofactor>
</comment>
<comment type="subunit">
    <text evidence="1">Monomer.</text>
</comment>
<comment type="similarity">
    <text evidence="1">Belongs to the IPP transferase family.</text>
</comment>
<organism>
    <name type="scientific">Staphylococcus carnosus (strain TM300)</name>
    <dbReference type="NCBI Taxonomy" id="396513"/>
    <lineage>
        <taxon>Bacteria</taxon>
        <taxon>Bacillati</taxon>
        <taxon>Bacillota</taxon>
        <taxon>Bacilli</taxon>
        <taxon>Bacillales</taxon>
        <taxon>Staphylococcaceae</taxon>
        <taxon>Staphylococcus</taxon>
    </lineage>
</organism>
<accession>B9DPA1</accession>
<proteinExistence type="inferred from homology"/>
<evidence type="ECO:0000255" key="1">
    <source>
        <dbReference type="HAMAP-Rule" id="MF_00185"/>
    </source>
</evidence>
<feature type="chain" id="PRO_0000377332" description="tRNA dimethylallyltransferase">
    <location>
        <begin position="1"/>
        <end position="316"/>
    </location>
</feature>
<feature type="region of interest" description="Interaction with substrate tRNA" evidence="1">
    <location>
        <begin position="38"/>
        <end position="41"/>
    </location>
</feature>
<feature type="binding site" evidence="1">
    <location>
        <begin position="13"/>
        <end position="20"/>
    </location>
    <ligand>
        <name>ATP</name>
        <dbReference type="ChEBI" id="CHEBI:30616"/>
    </ligand>
</feature>
<feature type="binding site" evidence="1">
    <location>
        <begin position="15"/>
        <end position="20"/>
    </location>
    <ligand>
        <name>substrate</name>
    </ligand>
</feature>
<feature type="site" description="Interaction with substrate tRNA" evidence="1">
    <location>
        <position position="104"/>
    </location>
</feature>
<dbReference type="EC" id="2.5.1.75" evidence="1"/>
<dbReference type="EMBL" id="AM295250">
    <property type="protein sequence ID" value="CAL27860.1"/>
    <property type="molecule type" value="Genomic_DNA"/>
</dbReference>
<dbReference type="RefSeq" id="WP_015900201.1">
    <property type="nucleotide sequence ID" value="NC_012121.1"/>
</dbReference>
<dbReference type="SMR" id="B9DPA1"/>
<dbReference type="GeneID" id="93793380"/>
<dbReference type="KEGG" id="sca:SCA_0952"/>
<dbReference type="eggNOG" id="COG0324">
    <property type="taxonomic scope" value="Bacteria"/>
</dbReference>
<dbReference type="HOGENOM" id="CLU_032616_0_1_9"/>
<dbReference type="OrthoDB" id="9776390at2"/>
<dbReference type="BioCyc" id="SCAR396513:SCA_RS04790-MONOMER"/>
<dbReference type="Proteomes" id="UP000000444">
    <property type="component" value="Chromosome"/>
</dbReference>
<dbReference type="GO" id="GO:0005524">
    <property type="term" value="F:ATP binding"/>
    <property type="evidence" value="ECO:0007669"/>
    <property type="project" value="UniProtKB-UniRule"/>
</dbReference>
<dbReference type="GO" id="GO:0052381">
    <property type="term" value="F:tRNA dimethylallyltransferase activity"/>
    <property type="evidence" value="ECO:0007669"/>
    <property type="project" value="UniProtKB-UniRule"/>
</dbReference>
<dbReference type="GO" id="GO:0006400">
    <property type="term" value="P:tRNA modification"/>
    <property type="evidence" value="ECO:0007669"/>
    <property type="project" value="TreeGrafter"/>
</dbReference>
<dbReference type="Gene3D" id="1.10.20.140">
    <property type="match status" value="1"/>
</dbReference>
<dbReference type="Gene3D" id="3.40.50.300">
    <property type="entry name" value="P-loop containing nucleotide triphosphate hydrolases"/>
    <property type="match status" value="1"/>
</dbReference>
<dbReference type="HAMAP" id="MF_00185">
    <property type="entry name" value="IPP_trans"/>
    <property type="match status" value="1"/>
</dbReference>
<dbReference type="InterPro" id="IPR039657">
    <property type="entry name" value="Dimethylallyltransferase"/>
</dbReference>
<dbReference type="InterPro" id="IPR018022">
    <property type="entry name" value="IPT"/>
</dbReference>
<dbReference type="InterPro" id="IPR027417">
    <property type="entry name" value="P-loop_NTPase"/>
</dbReference>
<dbReference type="NCBIfam" id="TIGR00174">
    <property type="entry name" value="miaA"/>
    <property type="match status" value="1"/>
</dbReference>
<dbReference type="PANTHER" id="PTHR11088">
    <property type="entry name" value="TRNA DIMETHYLALLYLTRANSFERASE"/>
    <property type="match status" value="1"/>
</dbReference>
<dbReference type="PANTHER" id="PTHR11088:SF60">
    <property type="entry name" value="TRNA DIMETHYLALLYLTRANSFERASE"/>
    <property type="match status" value="1"/>
</dbReference>
<dbReference type="Pfam" id="PF01715">
    <property type="entry name" value="IPPT"/>
    <property type="match status" value="1"/>
</dbReference>
<dbReference type="SUPFAM" id="SSF52540">
    <property type="entry name" value="P-loop containing nucleoside triphosphate hydrolases"/>
    <property type="match status" value="2"/>
</dbReference>
<gene>
    <name evidence="1" type="primary">miaA</name>
    <name type="ordered locus">Sca_0952</name>
</gene>
<protein>
    <recommendedName>
        <fullName evidence="1">tRNA dimethylallyltransferase</fullName>
        <ecNumber evidence="1">2.5.1.75</ecNumber>
    </recommendedName>
    <alternativeName>
        <fullName evidence="1">Dimethylallyl diphosphate:tRNA dimethylallyltransferase</fullName>
        <shortName evidence="1">DMAPP:tRNA dimethylallyltransferase</shortName>
        <shortName evidence="1">DMATase</shortName>
    </alternativeName>
    <alternativeName>
        <fullName evidence="1">Isopentenyl-diphosphate:tRNA isopentenyltransferase</fullName>
        <shortName evidence="1">IPP transferase</shortName>
        <shortName evidence="1">IPPT</shortName>
        <shortName evidence="1">IPTase</shortName>
    </alternativeName>
</protein>
<sequence length="316" mass="36328">MTANKPLLVVIVGPTAVGKTELSIELAKKIGGEIISGDSIQVYRGMDIGTAKVTKEEMQGVPHYLIDILDPDEPFSAFAFKERAQKLITEITERGHIPIIAGGTGLYIQSLIYDYPFDKEEISPEKEQEVKEKMAQLESLSNEALHDYLKSFDPDSAEDIHPNNRKRVLRAVEYYLKTKKLLSYRKKTVQFTENYDTLLIGVEMSREILYQRINCRVDSMLEHGLLQEVEQLMNQGYTSCQSMQAIGYKELIPAVNHEIPINQAVDKLKQHSRNYAKRQMTWFKNKMDVQWFDRAQTSLPLILDEITARIKKRRES</sequence>
<keyword id="KW-0067">ATP-binding</keyword>
<keyword id="KW-0460">Magnesium</keyword>
<keyword id="KW-0547">Nucleotide-binding</keyword>
<keyword id="KW-1185">Reference proteome</keyword>
<keyword id="KW-0808">Transferase</keyword>
<keyword id="KW-0819">tRNA processing</keyword>